<name>EFP_RHOJR</name>
<feature type="chain" id="PRO_1000010833" description="Elongation factor P">
    <location>
        <begin position="1"/>
        <end position="187"/>
    </location>
</feature>
<proteinExistence type="inferred from homology"/>
<gene>
    <name evidence="1" type="primary">efp</name>
    <name type="ordered locus">RHA1_ro07145</name>
</gene>
<sequence length="187" mass="20466">MASTSDFKNGLVLQIEGQLWTIIEFQHVKPGKGPAFVRTKLKNVLSGKVVDKTFNAGVKVETATVDRRDMTYLYHDGTDYIFMDGDTYDQISISEATVGDGARFMLENMAVQVATHEDVPLFVELPVTVELVVQHTDPGLQGDRSTGGTKPATLETGAEINVPLFINTGDKLKVDSRDGNYLGRVNS</sequence>
<comment type="function">
    <text evidence="1">Involved in peptide bond synthesis. Stimulates efficient translation and peptide-bond synthesis on native or reconstituted 70S ribosomes in vitro. Probably functions indirectly by altering the affinity of the ribosome for aminoacyl-tRNA, thus increasing their reactivity as acceptors for peptidyl transferase.</text>
</comment>
<comment type="pathway">
    <text evidence="1">Protein biosynthesis; polypeptide chain elongation.</text>
</comment>
<comment type="subcellular location">
    <subcellularLocation>
        <location evidence="1">Cytoplasm</location>
    </subcellularLocation>
</comment>
<comment type="similarity">
    <text evidence="1">Belongs to the elongation factor P family.</text>
</comment>
<organism>
    <name type="scientific">Rhodococcus jostii (strain RHA1)</name>
    <dbReference type="NCBI Taxonomy" id="101510"/>
    <lineage>
        <taxon>Bacteria</taxon>
        <taxon>Bacillati</taxon>
        <taxon>Actinomycetota</taxon>
        <taxon>Actinomycetes</taxon>
        <taxon>Mycobacteriales</taxon>
        <taxon>Nocardiaceae</taxon>
        <taxon>Rhodococcus</taxon>
    </lineage>
</organism>
<dbReference type="EMBL" id="CP000431">
    <property type="protein sequence ID" value="ABG98909.1"/>
    <property type="molecule type" value="Genomic_DNA"/>
</dbReference>
<dbReference type="RefSeq" id="WP_009480417.1">
    <property type="nucleotide sequence ID" value="NC_008268.1"/>
</dbReference>
<dbReference type="SMR" id="Q0S0M7"/>
<dbReference type="KEGG" id="rha:RHA1_ro07145"/>
<dbReference type="eggNOG" id="COG0231">
    <property type="taxonomic scope" value="Bacteria"/>
</dbReference>
<dbReference type="HOGENOM" id="CLU_074944_0_1_11"/>
<dbReference type="OrthoDB" id="9801844at2"/>
<dbReference type="UniPathway" id="UPA00345"/>
<dbReference type="Proteomes" id="UP000008710">
    <property type="component" value="Chromosome"/>
</dbReference>
<dbReference type="GO" id="GO:0005737">
    <property type="term" value="C:cytoplasm"/>
    <property type="evidence" value="ECO:0007669"/>
    <property type="project" value="UniProtKB-SubCell"/>
</dbReference>
<dbReference type="GO" id="GO:0003746">
    <property type="term" value="F:translation elongation factor activity"/>
    <property type="evidence" value="ECO:0007669"/>
    <property type="project" value="UniProtKB-UniRule"/>
</dbReference>
<dbReference type="GO" id="GO:0043043">
    <property type="term" value="P:peptide biosynthetic process"/>
    <property type="evidence" value="ECO:0007669"/>
    <property type="project" value="InterPro"/>
</dbReference>
<dbReference type="CDD" id="cd04470">
    <property type="entry name" value="S1_EF-P_repeat_1"/>
    <property type="match status" value="1"/>
</dbReference>
<dbReference type="CDD" id="cd05794">
    <property type="entry name" value="S1_EF-P_repeat_2"/>
    <property type="match status" value="1"/>
</dbReference>
<dbReference type="FunFam" id="2.30.30.30:FF:000003">
    <property type="entry name" value="Elongation factor P"/>
    <property type="match status" value="1"/>
</dbReference>
<dbReference type="FunFam" id="2.40.50.140:FF:000004">
    <property type="entry name" value="Elongation factor P"/>
    <property type="match status" value="1"/>
</dbReference>
<dbReference type="FunFam" id="2.40.50.140:FF:000009">
    <property type="entry name" value="Elongation factor P"/>
    <property type="match status" value="1"/>
</dbReference>
<dbReference type="Gene3D" id="2.30.30.30">
    <property type="match status" value="1"/>
</dbReference>
<dbReference type="Gene3D" id="2.40.50.140">
    <property type="entry name" value="Nucleic acid-binding proteins"/>
    <property type="match status" value="2"/>
</dbReference>
<dbReference type="HAMAP" id="MF_00141">
    <property type="entry name" value="EF_P"/>
    <property type="match status" value="1"/>
</dbReference>
<dbReference type="InterPro" id="IPR015365">
    <property type="entry name" value="Elong-fact-P_C"/>
</dbReference>
<dbReference type="InterPro" id="IPR012340">
    <property type="entry name" value="NA-bd_OB-fold"/>
</dbReference>
<dbReference type="InterPro" id="IPR014722">
    <property type="entry name" value="Rib_uL2_dom2"/>
</dbReference>
<dbReference type="InterPro" id="IPR020599">
    <property type="entry name" value="Transl_elong_fac_P/YeiP"/>
</dbReference>
<dbReference type="InterPro" id="IPR013185">
    <property type="entry name" value="Transl_elong_KOW-like"/>
</dbReference>
<dbReference type="InterPro" id="IPR001059">
    <property type="entry name" value="Transl_elong_P/YeiP_cen"/>
</dbReference>
<dbReference type="InterPro" id="IPR013852">
    <property type="entry name" value="Transl_elong_P/YeiP_CS"/>
</dbReference>
<dbReference type="InterPro" id="IPR011768">
    <property type="entry name" value="Transl_elongation_fac_P"/>
</dbReference>
<dbReference type="InterPro" id="IPR008991">
    <property type="entry name" value="Translation_prot_SH3-like_sf"/>
</dbReference>
<dbReference type="NCBIfam" id="TIGR00038">
    <property type="entry name" value="efp"/>
    <property type="match status" value="1"/>
</dbReference>
<dbReference type="NCBIfam" id="NF001810">
    <property type="entry name" value="PRK00529.1"/>
    <property type="match status" value="1"/>
</dbReference>
<dbReference type="PANTHER" id="PTHR30053">
    <property type="entry name" value="ELONGATION FACTOR P"/>
    <property type="match status" value="1"/>
</dbReference>
<dbReference type="PANTHER" id="PTHR30053:SF12">
    <property type="entry name" value="ELONGATION FACTOR P (EF-P) FAMILY PROTEIN"/>
    <property type="match status" value="1"/>
</dbReference>
<dbReference type="Pfam" id="PF01132">
    <property type="entry name" value="EFP"/>
    <property type="match status" value="1"/>
</dbReference>
<dbReference type="Pfam" id="PF08207">
    <property type="entry name" value="EFP_N"/>
    <property type="match status" value="1"/>
</dbReference>
<dbReference type="Pfam" id="PF09285">
    <property type="entry name" value="Elong-fact-P_C"/>
    <property type="match status" value="1"/>
</dbReference>
<dbReference type="PIRSF" id="PIRSF005901">
    <property type="entry name" value="EF-P"/>
    <property type="match status" value="1"/>
</dbReference>
<dbReference type="SMART" id="SM01185">
    <property type="entry name" value="EFP"/>
    <property type="match status" value="1"/>
</dbReference>
<dbReference type="SMART" id="SM00841">
    <property type="entry name" value="Elong-fact-P_C"/>
    <property type="match status" value="1"/>
</dbReference>
<dbReference type="SUPFAM" id="SSF50249">
    <property type="entry name" value="Nucleic acid-binding proteins"/>
    <property type="match status" value="2"/>
</dbReference>
<dbReference type="SUPFAM" id="SSF50104">
    <property type="entry name" value="Translation proteins SH3-like domain"/>
    <property type="match status" value="1"/>
</dbReference>
<dbReference type="PROSITE" id="PS01275">
    <property type="entry name" value="EFP"/>
    <property type="match status" value="1"/>
</dbReference>
<accession>Q0S0M7</accession>
<reference key="1">
    <citation type="journal article" date="2006" name="Proc. Natl. Acad. Sci. U.S.A.">
        <title>The complete genome of Rhodococcus sp. RHA1 provides insights into a catabolic powerhouse.</title>
        <authorList>
            <person name="McLeod M.P."/>
            <person name="Warren R.L."/>
            <person name="Hsiao W.W.L."/>
            <person name="Araki N."/>
            <person name="Myhre M."/>
            <person name="Fernandes C."/>
            <person name="Miyazawa D."/>
            <person name="Wong W."/>
            <person name="Lillquist A.L."/>
            <person name="Wang D."/>
            <person name="Dosanjh M."/>
            <person name="Hara H."/>
            <person name="Petrescu A."/>
            <person name="Morin R.D."/>
            <person name="Yang G."/>
            <person name="Stott J.M."/>
            <person name="Schein J.E."/>
            <person name="Shin H."/>
            <person name="Smailus D."/>
            <person name="Siddiqui A.S."/>
            <person name="Marra M.A."/>
            <person name="Jones S.J.M."/>
            <person name="Holt R."/>
            <person name="Brinkman F.S.L."/>
            <person name="Miyauchi K."/>
            <person name="Fukuda M."/>
            <person name="Davies J.E."/>
            <person name="Mohn W.W."/>
            <person name="Eltis L.D."/>
        </authorList>
    </citation>
    <scope>NUCLEOTIDE SEQUENCE [LARGE SCALE GENOMIC DNA]</scope>
    <source>
        <strain>RHA1</strain>
    </source>
</reference>
<keyword id="KW-0963">Cytoplasm</keyword>
<keyword id="KW-0251">Elongation factor</keyword>
<keyword id="KW-0648">Protein biosynthesis</keyword>
<protein>
    <recommendedName>
        <fullName evidence="1">Elongation factor P</fullName>
        <shortName evidence="1">EF-P</shortName>
    </recommendedName>
</protein>
<evidence type="ECO:0000255" key="1">
    <source>
        <dbReference type="HAMAP-Rule" id="MF_00141"/>
    </source>
</evidence>